<protein>
    <recommendedName>
        <fullName>Isoprene synthase, chloroplastic</fullName>
        <ecNumber evidence="3">4.2.3.27</ecNumber>
    </recommendedName>
</protein>
<organism>
    <name type="scientific">Populus tremuloides</name>
    <name type="common">Quaking aspen</name>
    <dbReference type="NCBI Taxonomy" id="3693"/>
    <lineage>
        <taxon>Eukaryota</taxon>
        <taxon>Viridiplantae</taxon>
        <taxon>Streptophyta</taxon>
        <taxon>Embryophyta</taxon>
        <taxon>Tracheophyta</taxon>
        <taxon>Spermatophyta</taxon>
        <taxon>Magnoliopsida</taxon>
        <taxon>eudicotyledons</taxon>
        <taxon>Gunneridae</taxon>
        <taxon>Pentapetalae</taxon>
        <taxon>rosids</taxon>
        <taxon>fabids</taxon>
        <taxon>Malpighiales</taxon>
        <taxon>Salicaceae</taxon>
        <taxon>Saliceae</taxon>
        <taxon>Populus</taxon>
    </lineage>
</organism>
<accession>Q7XAS7</accession>
<keyword id="KW-0150">Chloroplast</keyword>
<keyword id="KW-0456">Lyase</keyword>
<keyword id="KW-0460">Magnesium</keyword>
<keyword id="KW-0479">Metal-binding</keyword>
<keyword id="KW-0934">Plastid</keyword>
<keyword id="KW-0809">Transit peptide</keyword>
<gene>
    <name type="primary">ISPS</name>
</gene>
<comment type="function">
    <text evidence="3">Lyase that catalyzes the formation of isoprene from dimethylallyl diphosphate.</text>
</comment>
<comment type="catalytic activity">
    <reaction evidence="3">
        <text>dimethylallyl diphosphate = isoprene + diphosphate</text>
        <dbReference type="Rhea" id="RHEA:13369"/>
        <dbReference type="ChEBI" id="CHEBI:33019"/>
        <dbReference type="ChEBI" id="CHEBI:35194"/>
        <dbReference type="ChEBI" id="CHEBI:57623"/>
        <dbReference type="EC" id="4.2.3.27"/>
    </reaction>
</comment>
<comment type="cofactor">
    <cofactor evidence="1">
        <name>Mg(2+)</name>
        <dbReference type="ChEBI" id="CHEBI:18420"/>
    </cofactor>
    <cofactor evidence="1">
        <name>Mn(2+)</name>
        <dbReference type="ChEBI" id="CHEBI:29035"/>
    </cofactor>
    <text evidence="1">Binds 3 Mg(2+) or Mn(2+) ions per subunit.</text>
</comment>
<comment type="subcellular location">
    <subcellularLocation>
        <location evidence="4">Plastid</location>
        <location evidence="4">Chloroplast</location>
    </subcellularLocation>
</comment>
<comment type="domain">
    <text evidence="2">The Asp-Asp-Xaa-Xaa-Asp/Glu (DDXXD/E) motif is important for the catalytic activity, presumably through binding to Mg(2+).</text>
</comment>
<comment type="similarity">
    <text evidence="5">Belongs to the terpene synthase family. Tpsb subfamily.</text>
</comment>
<proteinExistence type="inferred from homology"/>
<name>ISPS_POPTM</name>
<evidence type="ECO:0000250" key="1">
    <source>
        <dbReference type="UniProtKB" id="A0A1C9J6A7"/>
    </source>
</evidence>
<evidence type="ECO:0000250" key="2">
    <source>
        <dbReference type="UniProtKB" id="Q40577"/>
    </source>
</evidence>
<evidence type="ECO:0000250" key="3">
    <source>
        <dbReference type="UniProtKB" id="Q9AR86"/>
    </source>
</evidence>
<evidence type="ECO:0000255" key="4"/>
<evidence type="ECO:0000305" key="5"/>
<dbReference type="EC" id="4.2.3.27" evidence="3"/>
<dbReference type="EMBL" id="AY341431">
    <property type="protein sequence ID" value="AAQ16588.1"/>
    <property type="molecule type" value="Genomic_DNA"/>
</dbReference>
<dbReference type="SMR" id="Q7XAS7"/>
<dbReference type="GO" id="GO:0009507">
    <property type="term" value="C:chloroplast"/>
    <property type="evidence" value="ECO:0007669"/>
    <property type="project" value="UniProtKB-SubCell"/>
</dbReference>
<dbReference type="GO" id="GO:0034009">
    <property type="term" value="F:isoprene synthase activity"/>
    <property type="evidence" value="ECO:0007669"/>
    <property type="project" value="UniProtKB-EC"/>
</dbReference>
<dbReference type="GO" id="GO:0000287">
    <property type="term" value="F:magnesium ion binding"/>
    <property type="evidence" value="ECO:0007669"/>
    <property type="project" value="InterPro"/>
</dbReference>
<dbReference type="GO" id="GO:0016102">
    <property type="term" value="P:diterpenoid biosynthetic process"/>
    <property type="evidence" value="ECO:0007669"/>
    <property type="project" value="InterPro"/>
</dbReference>
<dbReference type="CDD" id="cd00684">
    <property type="entry name" value="Terpene_cyclase_plant_C1"/>
    <property type="match status" value="1"/>
</dbReference>
<dbReference type="FunFam" id="1.10.600.10:FF:000007">
    <property type="entry name" value="Isoprene synthase, chloroplastic"/>
    <property type="match status" value="1"/>
</dbReference>
<dbReference type="FunFam" id="1.50.10.130:FF:000001">
    <property type="entry name" value="Isoprene synthase, chloroplastic"/>
    <property type="match status" value="1"/>
</dbReference>
<dbReference type="Gene3D" id="1.10.600.10">
    <property type="entry name" value="Farnesyl Diphosphate Synthase"/>
    <property type="match status" value="1"/>
</dbReference>
<dbReference type="Gene3D" id="1.50.10.130">
    <property type="entry name" value="Terpene synthase, N-terminal domain"/>
    <property type="match status" value="1"/>
</dbReference>
<dbReference type="InterPro" id="IPR008949">
    <property type="entry name" value="Isoprenoid_synthase_dom_sf"/>
</dbReference>
<dbReference type="InterPro" id="IPR044814">
    <property type="entry name" value="Terpene_cyclase_plant_C1"/>
</dbReference>
<dbReference type="InterPro" id="IPR001906">
    <property type="entry name" value="Terpene_synth_N"/>
</dbReference>
<dbReference type="InterPro" id="IPR036965">
    <property type="entry name" value="Terpene_synth_N_sf"/>
</dbReference>
<dbReference type="InterPro" id="IPR050148">
    <property type="entry name" value="Terpene_synthase-like"/>
</dbReference>
<dbReference type="InterPro" id="IPR005630">
    <property type="entry name" value="Terpene_synthase_metal-bd"/>
</dbReference>
<dbReference type="InterPro" id="IPR008930">
    <property type="entry name" value="Terpenoid_cyclase/PrenylTrfase"/>
</dbReference>
<dbReference type="PANTHER" id="PTHR31225">
    <property type="entry name" value="OS04G0344100 PROTEIN-RELATED"/>
    <property type="match status" value="1"/>
</dbReference>
<dbReference type="PANTHER" id="PTHR31225:SF252">
    <property type="entry name" value="TERPENE SYNTHASE 12-RELATED"/>
    <property type="match status" value="1"/>
</dbReference>
<dbReference type="Pfam" id="PF01397">
    <property type="entry name" value="Terpene_synth"/>
    <property type="match status" value="1"/>
</dbReference>
<dbReference type="Pfam" id="PF03936">
    <property type="entry name" value="Terpene_synth_C"/>
    <property type="match status" value="1"/>
</dbReference>
<dbReference type="SFLD" id="SFLDS00005">
    <property type="entry name" value="Isoprenoid_Synthase_Type_I"/>
    <property type="match status" value="1"/>
</dbReference>
<dbReference type="SFLD" id="SFLDG01604">
    <property type="entry name" value="Terpene_Cyclase_Like_1_C_Termi"/>
    <property type="match status" value="1"/>
</dbReference>
<dbReference type="SUPFAM" id="SSF48239">
    <property type="entry name" value="Terpenoid cyclases/Protein prenyltransferases"/>
    <property type="match status" value="1"/>
</dbReference>
<dbReference type="SUPFAM" id="SSF48576">
    <property type="entry name" value="Terpenoid synthases"/>
    <property type="match status" value="1"/>
</dbReference>
<sequence length="595" mass="68446">MATELLCLHRPISLTHKLFRNPLPKVIQATPLTLKLRCSVSTENVSFSETETETRRSANYEPNSWDYDYLLSSDTDESIEVHKDKAKKLEAEVRREINNEKAEFLTLLELIDNVQRLGLGYRFESDIRRALDRFVSSGGFDGVTKTSLHGTALSFRLLRQHGFEVSQEAFSGFKDQNGNFLENLKEDIKAILSLYEASFLALEGENILDEAKVFAISHLKELSEEKIGKELAEQVSHALELPLHRRTQRLEAVWSIEAYRKKEDANQVLLELAILDYNMIQSVYQRDLRETSRWWRRVGLATKLHFARDRLIESFYWAVGVAFEPQYSDCRNSVAKMFSFVTIIDDIYDVYGTLDELELFTDAVERWDVNAINDLPDYMKLCFLALYNTINEIAYDNLKDKGENILPYLTKAWADLCNAFLQEAKWLYNKSTPTFDDYFGNAWKSSSGPLQLIFAYFAVVQNIKKEEIENLQKYHDIISRPSHIFRLCNDLASASAEIARGETANSVSCYMRTKGISEELATESVMNLIDETWKKMNKEKLGGSLFAKPFVETAINLARQSHCTYHNGDAHTSPDELTRKRVLSVITEPILPFER</sequence>
<reference key="1">
    <citation type="journal article" date="2005" name="Plant Physiol.">
        <title>Evolution of the isoprene biosynthetic pathway in kudzu.</title>
        <authorList>
            <person name="Sharkey T.D."/>
            <person name="Yeh S."/>
            <person name="Wiberley A.E."/>
            <person name="Falbel T.G."/>
            <person name="Gong D."/>
            <person name="Fernandez D.E."/>
        </authorList>
    </citation>
    <scope>NUCLEOTIDE SEQUENCE [GENOMIC DNA]</scope>
</reference>
<feature type="transit peptide" description="Chloroplast" evidence="4">
    <location>
        <begin position="1"/>
        <end position="37"/>
    </location>
</feature>
<feature type="chain" id="PRO_0000398181" description="Isoprene synthase, chloroplastic">
    <location>
        <begin position="38"/>
        <end position="595"/>
    </location>
</feature>
<feature type="short sequence motif" description="DDXXD motif" evidence="2">
    <location>
        <begin position="345"/>
        <end position="349"/>
    </location>
</feature>
<feature type="binding site" evidence="3">
    <location>
        <position position="345"/>
    </location>
    <ligand>
        <name>dimethylallyl diphosphate</name>
        <dbReference type="ChEBI" id="CHEBI:57623"/>
    </ligand>
</feature>
<feature type="binding site" evidence="2">
    <location>
        <position position="345"/>
    </location>
    <ligand>
        <name>Mg(2+)</name>
        <dbReference type="ChEBI" id="CHEBI:18420"/>
        <label>1</label>
    </ligand>
</feature>
<feature type="binding site" evidence="2">
    <location>
        <position position="345"/>
    </location>
    <ligand>
        <name>Mg(2+)</name>
        <dbReference type="ChEBI" id="CHEBI:18420"/>
        <label>2</label>
    </ligand>
</feature>
<feature type="binding site" evidence="2">
    <location>
        <position position="349"/>
    </location>
    <ligand>
        <name>Mg(2+)</name>
        <dbReference type="ChEBI" id="CHEBI:18420"/>
        <label>1</label>
    </ligand>
</feature>
<feature type="binding site" evidence="2">
    <location>
        <position position="349"/>
    </location>
    <ligand>
        <name>Mg(2+)</name>
        <dbReference type="ChEBI" id="CHEBI:18420"/>
        <label>2</label>
    </ligand>
</feature>
<feature type="binding site" evidence="3">
    <location>
        <position position="423"/>
    </location>
    <ligand>
        <name>dimethylallyl diphosphate</name>
        <dbReference type="ChEBI" id="CHEBI:57623"/>
    </ligand>
</feature>
<feature type="binding site" evidence="3">
    <location>
        <position position="486"/>
    </location>
    <ligand>
        <name>dimethylallyl diphosphate</name>
        <dbReference type="ChEBI" id="CHEBI:57623"/>
    </ligand>
</feature>
<feature type="binding site" evidence="3">
    <location>
        <position position="489"/>
    </location>
    <ligand>
        <name>dimethylallyl diphosphate</name>
        <dbReference type="ChEBI" id="CHEBI:57623"/>
    </ligand>
</feature>
<feature type="binding site" evidence="2">
    <location>
        <position position="489"/>
    </location>
    <ligand>
        <name>Mg(2+)</name>
        <dbReference type="ChEBI" id="CHEBI:18420"/>
        <label>3</label>
    </ligand>
</feature>
<feature type="binding site" evidence="2">
    <location>
        <position position="493"/>
    </location>
    <ligand>
        <name>Mg(2+)</name>
        <dbReference type="ChEBI" id="CHEBI:18420"/>
        <label>3</label>
    </ligand>
</feature>
<feature type="binding site" evidence="2">
    <location>
        <position position="497"/>
    </location>
    <ligand>
        <name>Mg(2+)</name>
        <dbReference type="ChEBI" id="CHEBI:18420"/>
        <label>3</label>
    </ligand>
</feature>